<keyword id="KW-0067">ATP-binding</keyword>
<keyword id="KW-0436">Ligase</keyword>
<keyword id="KW-0547">Nucleotide-binding</keyword>
<organism>
    <name type="scientific">Vibrio atlanticus (strain LGP32)</name>
    <name type="common">Vibrio splendidus (strain Mel32)</name>
    <dbReference type="NCBI Taxonomy" id="575788"/>
    <lineage>
        <taxon>Bacteria</taxon>
        <taxon>Pseudomonadati</taxon>
        <taxon>Pseudomonadota</taxon>
        <taxon>Gammaproteobacteria</taxon>
        <taxon>Vibrionales</taxon>
        <taxon>Vibrionaceae</taxon>
        <taxon>Vibrio</taxon>
    </lineage>
</organism>
<proteinExistence type="inferred from homology"/>
<sequence>MHSTWQPAATIKQLKQRADILNQIRQFFVERNVMEVDTPAMSHATVTDVHLHTFKTEFVGPGYAHGQPLFFMTSPEFHMKRLLAAGSGCIYQICKSFRNEENGRYHNPEFTMLEWYRVGFDHHDLMDEMDLLLQQVLKSGTAERMTYQQAFIDVLGVCPLEDSMDTLKQAAAKLGLSDIADPEQDRDTLLQLLFSIGVEAKIGQQVPAFVYDFPASQAALAKINPNDSRVADRFEVYFKGIELANGFHELDKPQEQLKRFEDDNTKRIEMGLSPQPIDHHLIEALKAGLPDCAGVALGIDRLIMLALGYDHIDDVTAFPFPRS</sequence>
<evidence type="ECO:0000255" key="1">
    <source>
        <dbReference type="HAMAP-Rule" id="MF_00174"/>
    </source>
</evidence>
<feature type="chain" id="PRO_1000199264" description="Elongation factor P--(R)-beta-lysine ligase">
    <location>
        <begin position="1"/>
        <end position="323"/>
    </location>
</feature>
<feature type="binding site" evidence="1">
    <location>
        <begin position="74"/>
        <end position="76"/>
    </location>
    <ligand>
        <name>substrate</name>
    </ligand>
</feature>
<feature type="binding site" evidence="1">
    <location>
        <begin position="98"/>
        <end position="100"/>
    </location>
    <ligand>
        <name>ATP</name>
        <dbReference type="ChEBI" id="CHEBI:30616"/>
    </ligand>
</feature>
<feature type="binding site" evidence="1">
    <location>
        <position position="107"/>
    </location>
    <ligand>
        <name>ATP</name>
        <dbReference type="ChEBI" id="CHEBI:30616"/>
    </ligand>
</feature>
<feature type="binding site" evidence="1">
    <location>
        <position position="116"/>
    </location>
    <ligand>
        <name>substrate</name>
    </ligand>
</feature>
<feature type="binding site" evidence="1">
    <location>
        <begin position="242"/>
        <end position="243"/>
    </location>
    <ligand>
        <name>ATP</name>
        <dbReference type="ChEBI" id="CHEBI:30616"/>
    </ligand>
</feature>
<feature type="binding site" evidence="1">
    <location>
        <position position="249"/>
    </location>
    <ligand>
        <name>substrate</name>
    </ligand>
</feature>
<feature type="binding site" evidence="1">
    <location>
        <position position="298"/>
    </location>
    <ligand>
        <name>ATP</name>
        <dbReference type="ChEBI" id="CHEBI:30616"/>
    </ligand>
</feature>
<dbReference type="EC" id="6.3.2.-" evidence="1"/>
<dbReference type="EMBL" id="FM954972">
    <property type="protein sequence ID" value="CAV17280.1"/>
    <property type="molecule type" value="Genomic_DNA"/>
</dbReference>
<dbReference type="RefSeq" id="WP_012603098.1">
    <property type="nucleotide sequence ID" value="NZ_AP025510.1"/>
</dbReference>
<dbReference type="SMR" id="B7VHR8"/>
<dbReference type="STRING" id="575788.VS_0249"/>
<dbReference type="GeneID" id="77317437"/>
<dbReference type="KEGG" id="vsp:VS_0249"/>
<dbReference type="PATRIC" id="fig|575788.5.peg.1637"/>
<dbReference type="eggNOG" id="COG2269">
    <property type="taxonomic scope" value="Bacteria"/>
</dbReference>
<dbReference type="HOGENOM" id="CLU_008255_1_1_6"/>
<dbReference type="Proteomes" id="UP000009100">
    <property type="component" value="Chromosome 1"/>
</dbReference>
<dbReference type="GO" id="GO:0005829">
    <property type="term" value="C:cytosol"/>
    <property type="evidence" value="ECO:0007669"/>
    <property type="project" value="TreeGrafter"/>
</dbReference>
<dbReference type="GO" id="GO:0016880">
    <property type="term" value="F:acid-ammonia (or amide) ligase activity"/>
    <property type="evidence" value="ECO:0007669"/>
    <property type="project" value="UniProtKB-UniRule"/>
</dbReference>
<dbReference type="GO" id="GO:0005524">
    <property type="term" value="F:ATP binding"/>
    <property type="evidence" value="ECO:0007669"/>
    <property type="project" value="UniProtKB-UniRule"/>
</dbReference>
<dbReference type="GO" id="GO:0004824">
    <property type="term" value="F:lysine-tRNA ligase activity"/>
    <property type="evidence" value="ECO:0007669"/>
    <property type="project" value="InterPro"/>
</dbReference>
<dbReference type="GO" id="GO:0000049">
    <property type="term" value="F:tRNA binding"/>
    <property type="evidence" value="ECO:0007669"/>
    <property type="project" value="TreeGrafter"/>
</dbReference>
<dbReference type="GO" id="GO:0006430">
    <property type="term" value="P:lysyl-tRNA aminoacylation"/>
    <property type="evidence" value="ECO:0007669"/>
    <property type="project" value="InterPro"/>
</dbReference>
<dbReference type="FunFam" id="3.30.930.10:FF:000017">
    <property type="entry name" value="Elongation factor P--(R)-beta-lysine ligase"/>
    <property type="match status" value="1"/>
</dbReference>
<dbReference type="Gene3D" id="3.30.930.10">
    <property type="entry name" value="Bira Bifunctional Protein, Domain 2"/>
    <property type="match status" value="1"/>
</dbReference>
<dbReference type="HAMAP" id="MF_00174">
    <property type="entry name" value="EF_P_modif_A"/>
    <property type="match status" value="1"/>
</dbReference>
<dbReference type="InterPro" id="IPR004364">
    <property type="entry name" value="Aa-tRNA-synt_II"/>
</dbReference>
<dbReference type="InterPro" id="IPR006195">
    <property type="entry name" value="aa-tRNA-synth_II"/>
</dbReference>
<dbReference type="InterPro" id="IPR045864">
    <property type="entry name" value="aa-tRNA-synth_II/BPL/LPL"/>
</dbReference>
<dbReference type="InterPro" id="IPR004525">
    <property type="entry name" value="EpmA"/>
</dbReference>
<dbReference type="NCBIfam" id="TIGR00462">
    <property type="entry name" value="genX"/>
    <property type="match status" value="1"/>
</dbReference>
<dbReference type="NCBIfam" id="NF006828">
    <property type="entry name" value="PRK09350.1"/>
    <property type="match status" value="1"/>
</dbReference>
<dbReference type="PANTHER" id="PTHR42918:SF6">
    <property type="entry name" value="ELONGATION FACTOR P--(R)-BETA-LYSINE LIGASE"/>
    <property type="match status" value="1"/>
</dbReference>
<dbReference type="PANTHER" id="PTHR42918">
    <property type="entry name" value="LYSYL-TRNA SYNTHETASE"/>
    <property type="match status" value="1"/>
</dbReference>
<dbReference type="Pfam" id="PF00152">
    <property type="entry name" value="tRNA-synt_2"/>
    <property type="match status" value="1"/>
</dbReference>
<dbReference type="SUPFAM" id="SSF55681">
    <property type="entry name" value="Class II aaRS and biotin synthetases"/>
    <property type="match status" value="1"/>
</dbReference>
<dbReference type="PROSITE" id="PS50862">
    <property type="entry name" value="AA_TRNA_LIGASE_II"/>
    <property type="match status" value="1"/>
</dbReference>
<reference key="1">
    <citation type="submission" date="2009-02" db="EMBL/GenBank/DDBJ databases">
        <title>Vibrio splendidus str. LGP32 complete genome.</title>
        <authorList>
            <person name="Mazel D."/>
            <person name="Le Roux F."/>
        </authorList>
    </citation>
    <scope>NUCLEOTIDE SEQUENCE [LARGE SCALE GENOMIC DNA]</scope>
    <source>
        <strain>LGP32</strain>
    </source>
</reference>
<protein>
    <recommendedName>
        <fullName evidence="1">Elongation factor P--(R)-beta-lysine ligase</fullName>
        <shortName evidence="1">EF-P--(R)-beta-lysine ligase</shortName>
        <ecNumber evidence="1">6.3.2.-</ecNumber>
    </recommendedName>
    <alternativeName>
        <fullName evidence="1">EF-P post-translational modification enzyme A</fullName>
    </alternativeName>
    <alternativeName>
        <fullName evidence="1">EF-P-lysine lysyltransferase</fullName>
    </alternativeName>
</protein>
<gene>
    <name evidence="1" type="primary">epmA</name>
    <name type="synonym">yjeA</name>
    <name type="ordered locus">VS_0249</name>
</gene>
<comment type="function">
    <text evidence="1">With EpmB is involved in the beta-lysylation step of the post-translational modification of translation elongation factor P (EF-P). Catalyzes the ATP-dependent activation of (R)-beta-lysine produced by EpmB, forming a lysyl-adenylate, from which the beta-lysyl moiety is then transferred to the epsilon-amino group of a conserved specific lysine residue in EF-P.</text>
</comment>
<comment type="catalytic activity">
    <reaction evidence="1">
        <text>D-beta-lysine + L-lysyl-[protein] + ATP = N(6)-((3R)-3,6-diaminohexanoyl)-L-lysyl-[protein] + AMP + diphosphate + H(+)</text>
        <dbReference type="Rhea" id="RHEA:83435"/>
        <dbReference type="Rhea" id="RHEA-COMP:9752"/>
        <dbReference type="Rhea" id="RHEA-COMP:20131"/>
        <dbReference type="ChEBI" id="CHEBI:15378"/>
        <dbReference type="ChEBI" id="CHEBI:29969"/>
        <dbReference type="ChEBI" id="CHEBI:30616"/>
        <dbReference type="ChEBI" id="CHEBI:33019"/>
        <dbReference type="ChEBI" id="CHEBI:84138"/>
        <dbReference type="ChEBI" id="CHEBI:156053"/>
        <dbReference type="ChEBI" id="CHEBI:456215"/>
    </reaction>
    <physiologicalReaction direction="left-to-right" evidence="1">
        <dbReference type="Rhea" id="RHEA:83436"/>
    </physiologicalReaction>
</comment>
<comment type="subunit">
    <text evidence="1">Homodimer.</text>
</comment>
<comment type="similarity">
    <text evidence="1">Belongs to the class-II aminoacyl-tRNA synthetase family. EpmA subfamily.</text>
</comment>
<accession>B7VHR8</accession>
<name>EPMA_VIBA3</name>